<dbReference type="EC" id="6.3.4.4" evidence="1"/>
<dbReference type="EMBL" id="CP001083">
    <property type="protein sequence ID" value="ACQ53916.1"/>
    <property type="molecule type" value="Genomic_DNA"/>
</dbReference>
<dbReference type="RefSeq" id="WP_003361802.1">
    <property type="nucleotide sequence ID" value="NC_012658.1"/>
</dbReference>
<dbReference type="SMR" id="C3KWG8"/>
<dbReference type="KEGG" id="cbi:CLJ_B3955"/>
<dbReference type="HOGENOM" id="CLU_029848_0_0_9"/>
<dbReference type="UniPathway" id="UPA00075">
    <property type="reaction ID" value="UER00335"/>
</dbReference>
<dbReference type="Proteomes" id="UP000002333">
    <property type="component" value="Chromosome"/>
</dbReference>
<dbReference type="GO" id="GO:0005737">
    <property type="term" value="C:cytoplasm"/>
    <property type="evidence" value="ECO:0007669"/>
    <property type="project" value="UniProtKB-SubCell"/>
</dbReference>
<dbReference type="GO" id="GO:0004019">
    <property type="term" value="F:adenylosuccinate synthase activity"/>
    <property type="evidence" value="ECO:0007669"/>
    <property type="project" value="UniProtKB-UniRule"/>
</dbReference>
<dbReference type="GO" id="GO:0005525">
    <property type="term" value="F:GTP binding"/>
    <property type="evidence" value="ECO:0007669"/>
    <property type="project" value="UniProtKB-UniRule"/>
</dbReference>
<dbReference type="GO" id="GO:0000287">
    <property type="term" value="F:magnesium ion binding"/>
    <property type="evidence" value="ECO:0007669"/>
    <property type="project" value="UniProtKB-UniRule"/>
</dbReference>
<dbReference type="GO" id="GO:0044208">
    <property type="term" value="P:'de novo' AMP biosynthetic process"/>
    <property type="evidence" value="ECO:0007669"/>
    <property type="project" value="UniProtKB-UniRule"/>
</dbReference>
<dbReference type="GO" id="GO:0046040">
    <property type="term" value="P:IMP metabolic process"/>
    <property type="evidence" value="ECO:0007669"/>
    <property type="project" value="TreeGrafter"/>
</dbReference>
<dbReference type="CDD" id="cd03108">
    <property type="entry name" value="AdSS"/>
    <property type="match status" value="1"/>
</dbReference>
<dbReference type="FunFam" id="1.10.300.10:FF:000001">
    <property type="entry name" value="Adenylosuccinate synthetase"/>
    <property type="match status" value="1"/>
</dbReference>
<dbReference type="FunFam" id="3.90.170.10:FF:000001">
    <property type="entry name" value="Adenylosuccinate synthetase"/>
    <property type="match status" value="1"/>
</dbReference>
<dbReference type="Gene3D" id="3.40.440.10">
    <property type="entry name" value="Adenylosuccinate Synthetase, subunit A, domain 1"/>
    <property type="match status" value="1"/>
</dbReference>
<dbReference type="Gene3D" id="1.10.300.10">
    <property type="entry name" value="Adenylosuccinate Synthetase, subunit A, domain 2"/>
    <property type="match status" value="1"/>
</dbReference>
<dbReference type="Gene3D" id="3.90.170.10">
    <property type="entry name" value="Adenylosuccinate Synthetase, subunit A, domain 3"/>
    <property type="match status" value="1"/>
</dbReference>
<dbReference type="HAMAP" id="MF_00011">
    <property type="entry name" value="Adenylosucc_synth"/>
    <property type="match status" value="1"/>
</dbReference>
<dbReference type="InterPro" id="IPR018220">
    <property type="entry name" value="Adenylosuccin_syn_GTP-bd"/>
</dbReference>
<dbReference type="InterPro" id="IPR033128">
    <property type="entry name" value="Adenylosuccin_syn_Lys_AS"/>
</dbReference>
<dbReference type="InterPro" id="IPR042109">
    <property type="entry name" value="Adenylosuccinate_synth_dom1"/>
</dbReference>
<dbReference type="InterPro" id="IPR042110">
    <property type="entry name" value="Adenylosuccinate_synth_dom2"/>
</dbReference>
<dbReference type="InterPro" id="IPR042111">
    <property type="entry name" value="Adenylosuccinate_synth_dom3"/>
</dbReference>
<dbReference type="InterPro" id="IPR001114">
    <property type="entry name" value="Adenylosuccinate_synthetase"/>
</dbReference>
<dbReference type="InterPro" id="IPR027417">
    <property type="entry name" value="P-loop_NTPase"/>
</dbReference>
<dbReference type="NCBIfam" id="NF002223">
    <property type="entry name" value="PRK01117.1"/>
    <property type="match status" value="1"/>
</dbReference>
<dbReference type="NCBIfam" id="TIGR00184">
    <property type="entry name" value="purA"/>
    <property type="match status" value="1"/>
</dbReference>
<dbReference type="PANTHER" id="PTHR11846">
    <property type="entry name" value="ADENYLOSUCCINATE SYNTHETASE"/>
    <property type="match status" value="1"/>
</dbReference>
<dbReference type="PANTHER" id="PTHR11846:SF0">
    <property type="entry name" value="ADENYLOSUCCINATE SYNTHETASE"/>
    <property type="match status" value="1"/>
</dbReference>
<dbReference type="Pfam" id="PF00709">
    <property type="entry name" value="Adenylsucc_synt"/>
    <property type="match status" value="1"/>
</dbReference>
<dbReference type="SMART" id="SM00788">
    <property type="entry name" value="Adenylsucc_synt"/>
    <property type="match status" value="1"/>
</dbReference>
<dbReference type="SUPFAM" id="SSF52540">
    <property type="entry name" value="P-loop containing nucleoside triphosphate hydrolases"/>
    <property type="match status" value="1"/>
</dbReference>
<dbReference type="PROSITE" id="PS01266">
    <property type="entry name" value="ADENYLOSUCCIN_SYN_1"/>
    <property type="match status" value="1"/>
</dbReference>
<dbReference type="PROSITE" id="PS00513">
    <property type="entry name" value="ADENYLOSUCCIN_SYN_2"/>
    <property type="match status" value="1"/>
</dbReference>
<feature type="chain" id="PRO_1000201751" description="Adenylosuccinate synthetase">
    <location>
        <begin position="1"/>
        <end position="428"/>
    </location>
</feature>
<feature type="active site" description="Proton acceptor" evidence="1">
    <location>
        <position position="13"/>
    </location>
</feature>
<feature type="active site" description="Proton donor" evidence="1">
    <location>
        <position position="41"/>
    </location>
</feature>
<feature type="binding site" evidence="1">
    <location>
        <begin position="12"/>
        <end position="18"/>
    </location>
    <ligand>
        <name>GTP</name>
        <dbReference type="ChEBI" id="CHEBI:37565"/>
    </ligand>
</feature>
<feature type="binding site" description="in other chain" evidence="1">
    <location>
        <begin position="13"/>
        <end position="16"/>
    </location>
    <ligand>
        <name>IMP</name>
        <dbReference type="ChEBI" id="CHEBI:58053"/>
        <note>ligand shared between dimeric partners</note>
    </ligand>
</feature>
<feature type="binding site" evidence="1">
    <location>
        <position position="13"/>
    </location>
    <ligand>
        <name>Mg(2+)</name>
        <dbReference type="ChEBI" id="CHEBI:18420"/>
    </ligand>
</feature>
<feature type="binding site" description="in other chain" evidence="1">
    <location>
        <begin position="38"/>
        <end position="41"/>
    </location>
    <ligand>
        <name>IMP</name>
        <dbReference type="ChEBI" id="CHEBI:58053"/>
        <note>ligand shared between dimeric partners</note>
    </ligand>
</feature>
<feature type="binding site" evidence="1">
    <location>
        <begin position="40"/>
        <end position="42"/>
    </location>
    <ligand>
        <name>GTP</name>
        <dbReference type="ChEBI" id="CHEBI:37565"/>
    </ligand>
</feature>
<feature type="binding site" evidence="1">
    <location>
        <position position="40"/>
    </location>
    <ligand>
        <name>Mg(2+)</name>
        <dbReference type="ChEBI" id="CHEBI:18420"/>
    </ligand>
</feature>
<feature type="binding site" description="in other chain" evidence="1">
    <location>
        <position position="130"/>
    </location>
    <ligand>
        <name>IMP</name>
        <dbReference type="ChEBI" id="CHEBI:58053"/>
        <note>ligand shared between dimeric partners</note>
    </ligand>
</feature>
<feature type="binding site" evidence="1">
    <location>
        <position position="144"/>
    </location>
    <ligand>
        <name>IMP</name>
        <dbReference type="ChEBI" id="CHEBI:58053"/>
        <note>ligand shared between dimeric partners</note>
    </ligand>
</feature>
<feature type="binding site" description="in other chain" evidence="1">
    <location>
        <position position="225"/>
    </location>
    <ligand>
        <name>IMP</name>
        <dbReference type="ChEBI" id="CHEBI:58053"/>
        <note>ligand shared between dimeric partners</note>
    </ligand>
</feature>
<feature type="binding site" description="in other chain" evidence="1">
    <location>
        <position position="240"/>
    </location>
    <ligand>
        <name>IMP</name>
        <dbReference type="ChEBI" id="CHEBI:58053"/>
        <note>ligand shared between dimeric partners</note>
    </ligand>
</feature>
<feature type="binding site" evidence="1">
    <location>
        <begin position="300"/>
        <end position="306"/>
    </location>
    <ligand>
        <name>substrate</name>
    </ligand>
</feature>
<feature type="binding site" description="in other chain" evidence="1">
    <location>
        <position position="304"/>
    </location>
    <ligand>
        <name>IMP</name>
        <dbReference type="ChEBI" id="CHEBI:58053"/>
        <note>ligand shared between dimeric partners</note>
    </ligand>
</feature>
<feature type="binding site" evidence="1">
    <location>
        <position position="306"/>
    </location>
    <ligand>
        <name>GTP</name>
        <dbReference type="ChEBI" id="CHEBI:37565"/>
    </ligand>
</feature>
<feature type="binding site" evidence="1">
    <location>
        <begin position="332"/>
        <end position="334"/>
    </location>
    <ligand>
        <name>GTP</name>
        <dbReference type="ChEBI" id="CHEBI:37565"/>
    </ligand>
</feature>
<feature type="binding site" evidence="1">
    <location>
        <begin position="414"/>
        <end position="416"/>
    </location>
    <ligand>
        <name>GTP</name>
        <dbReference type="ChEBI" id="CHEBI:37565"/>
    </ligand>
</feature>
<gene>
    <name evidence="1" type="primary">purA</name>
    <name type="ordered locus">CLJ_B3955</name>
</gene>
<reference key="1">
    <citation type="submission" date="2008-05" db="EMBL/GenBank/DDBJ databases">
        <title>Genome sequence of Clostridium botulinum Ba4 strain 657.</title>
        <authorList>
            <person name="Shrivastava S."/>
            <person name="Brown J.L."/>
            <person name="Bruce D."/>
            <person name="Detter C."/>
            <person name="Munk C."/>
            <person name="Smith L.A."/>
            <person name="Smith T.J."/>
            <person name="Sutton G."/>
            <person name="Brettin T.S."/>
        </authorList>
    </citation>
    <scope>NUCLEOTIDE SEQUENCE [LARGE SCALE GENOMIC DNA]</scope>
    <source>
        <strain>657 / Type Ba4</strain>
    </source>
</reference>
<sequence length="428" mass="47111">MSAFIVLGAQWGDEGKGKMTDYLAENADVVVRFQGGNNAGHTVVVGEKEYKLHLIPSGILYNDKLNVIGNGVVLDPKALFEEINYLESLGVEITPDRLIISDRAHVIMPYHRVLDGIKERARGNKDIGTTGKGIGPSYTDKMERSGIRVCDLIHKEVFEENLKETLEVKNKIITEVFGEEALDYDEIYNEYLGYAEKLRPFVKDISVIVNKKIKDGKEVLFEGAQGTLLDIDYGTYPYVTSSSTIAGGVCIGAGVGPTAITNAVGIAKAYTTRVGKGPFPTELLDSTGDWVREKGHEFGVTTGRARRCGWLDLVILKTSARVSGLTSFAVTKIDTLAGLDTLKVCTGYRLNGEIIDYVPASLEDLAKCKPIYEEFQGWDDSIANARCYKDLPENAIKYLKKIEDFTETKVSIVSVGPKRDQTMIISEI</sequence>
<name>PURA_CLOB6</name>
<proteinExistence type="inferred from homology"/>
<accession>C3KWG8</accession>
<protein>
    <recommendedName>
        <fullName evidence="1">Adenylosuccinate synthetase</fullName>
        <shortName evidence="1">AMPSase</shortName>
        <shortName evidence="1">AdSS</shortName>
        <ecNumber evidence="1">6.3.4.4</ecNumber>
    </recommendedName>
    <alternativeName>
        <fullName evidence="1">IMP--aspartate ligase</fullName>
    </alternativeName>
</protein>
<keyword id="KW-0963">Cytoplasm</keyword>
<keyword id="KW-0342">GTP-binding</keyword>
<keyword id="KW-0436">Ligase</keyword>
<keyword id="KW-0460">Magnesium</keyword>
<keyword id="KW-0479">Metal-binding</keyword>
<keyword id="KW-0547">Nucleotide-binding</keyword>
<keyword id="KW-0658">Purine biosynthesis</keyword>
<comment type="function">
    <text evidence="1">Plays an important role in the de novo pathway of purine nucleotide biosynthesis. Catalyzes the first committed step in the biosynthesis of AMP from IMP.</text>
</comment>
<comment type="catalytic activity">
    <reaction evidence="1">
        <text>IMP + L-aspartate + GTP = N(6)-(1,2-dicarboxyethyl)-AMP + GDP + phosphate + 2 H(+)</text>
        <dbReference type="Rhea" id="RHEA:15753"/>
        <dbReference type="ChEBI" id="CHEBI:15378"/>
        <dbReference type="ChEBI" id="CHEBI:29991"/>
        <dbReference type="ChEBI" id="CHEBI:37565"/>
        <dbReference type="ChEBI" id="CHEBI:43474"/>
        <dbReference type="ChEBI" id="CHEBI:57567"/>
        <dbReference type="ChEBI" id="CHEBI:58053"/>
        <dbReference type="ChEBI" id="CHEBI:58189"/>
        <dbReference type="EC" id="6.3.4.4"/>
    </reaction>
</comment>
<comment type="cofactor">
    <cofactor evidence="1">
        <name>Mg(2+)</name>
        <dbReference type="ChEBI" id="CHEBI:18420"/>
    </cofactor>
    <text evidence="1">Binds 1 Mg(2+) ion per subunit.</text>
</comment>
<comment type="pathway">
    <text evidence="1">Purine metabolism; AMP biosynthesis via de novo pathway; AMP from IMP: step 1/2.</text>
</comment>
<comment type="subunit">
    <text evidence="1">Homodimer.</text>
</comment>
<comment type="subcellular location">
    <subcellularLocation>
        <location evidence="1">Cytoplasm</location>
    </subcellularLocation>
</comment>
<comment type="similarity">
    <text evidence="1">Belongs to the adenylosuccinate synthetase family.</text>
</comment>
<organism>
    <name type="scientific">Clostridium botulinum (strain 657 / Type Ba4)</name>
    <dbReference type="NCBI Taxonomy" id="515621"/>
    <lineage>
        <taxon>Bacteria</taxon>
        <taxon>Bacillati</taxon>
        <taxon>Bacillota</taxon>
        <taxon>Clostridia</taxon>
        <taxon>Eubacteriales</taxon>
        <taxon>Clostridiaceae</taxon>
        <taxon>Clostridium</taxon>
    </lineage>
</organism>
<evidence type="ECO:0000255" key="1">
    <source>
        <dbReference type="HAMAP-Rule" id="MF_00011"/>
    </source>
</evidence>